<reference key="1">
    <citation type="submission" date="2007-02" db="EMBL/GenBank/DDBJ databases">
        <title>Complete sequence of Mycobacterium sp. JLS.</title>
        <authorList>
            <consortium name="US DOE Joint Genome Institute"/>
            <person name="Copeland A."/>
            <person name="Lucas S."/>
            <person name="Lapidus A."/>
            <person name="Barry K."/>
            <person name="Detter J.C."/>
            <person name="Glavina del Rio T."/>
            <person name="Hammon N."/>
            <person name="Israni S."/>
            <person name="Dalin E."/>
            <person name="Tice H."/>
            <person name="Pitluck S."/>
            <person name="Chain P."/>
            <person name="Malfatti S."/>
            <person name="Shin M."/>
            <person name="Vergez L."/>
            <person name="Schmutz J."/>
            <person name="Larimer F."/>
            <person name="Land M."/>
            <person name="Hauser L."/>
            <person name="Kyrpides N."/>
            <person name="Mikhailova N."/>
            <person name="Miller C.D."/>
            <person name="Anderson A.J."/>
            <person name="Sims R.C."/>
            <person name="Richardson P."/>
        </authorList>
    </citation>
    <scope>NUCLEOTIDE SEQUENCE [LARGE SCALE GENOMIC DNA]</scope>
    <source>
        <strain>JLS</strain>
    </source>
</reference>
<protein>
    <recommendedName>
        <fullName evidence="1">Adenosylcobinamide-GDP ribazoletransferase</fullName>
        <ecNumber evidence="1">2.7.8.26</ecNumber>
    </recommendedName>
    <alternativeName>
        <fullName evidence="1">Cobalamin synthase</fullName>
    </alternativeName>
    <alternativeName>
        <fullName evidence="1">Cobalamin-5'-phosphate synthase</fullName>
    </alternativeName>
</protein>
<feature type="chain" id="PRO_1000045780" description="Adenosylcobinamide-GDP ribazoletransferase">
    <location>
        <begin position="1"/>
        <end position="248"/>
    </location>
</feature>
<feature type="transmembrane region" description="Helical" evidence="1">
    <location>
        <begin position="1"/>
        <end position="21"/>
    </location>
</feature>
<feature type="transmembrane region" description="Helical" evidence="1">
    <location>
        <begin position="35"/>
        <end position="55"/>
    </location>
</feature>
<feature type="transmembrane region" description="Helical" evidence="1">
    <location>
        <begin position="59"/>
        <end position="79"/>
    </location>
</feature>
<feature type="transmembrane region" description="Helical" evidence="1">
    <location>
        <begin position="101"/>
        <end position="121"/>
    </location>
</feature>
<feature type="transmembrane region" description="Helical" evidence="1">
    <location>
        <begin position="123"/>
        <end position="143"/>
    </location>
</feature>
<feature type="transmembrane region" description="Helical" evidence="1">
    <location>
        <begin position="171"/>
        <end position="191"/>
    </location>
</feature>
<feature type="transmembrane region" description="Helical" evidence="1">
    <location>
        <begin position="197"/>
        <end position="217"/>
    </location>
</feature>
<feature type="transmembrane region" description="Helical" evidence="1">
    <location>
        <begin position="227"/>
        <end position="247"/>
    </location>
</feature>
<gene>
    <name evidence="1" type="primary">cobS</name>
    <name type="ordered locus">Mjls_3317</name>
</gene>
<comment type="function">
    <text evidence="1">Joins adenosylcobinamide-GDP and alpha-ribazole to generate adenosylcobalamin (Ado-cobalamin). Also synthesizes adenosylcobalamin 5'-phosphate from adenosylcobinamide-GDP and alpha-ribazole 5'-phosphate.</text>
</comment>
<comment type="catalytic activity">
    <reaction evidence="1">
        <text>alpha-ribazole + adenosylcob(III)inamide-GDP = adenosylcob(III)alamin + GMP + H(+)</text>
        <dbReference type="Rhea" id="RHEA:16049"/>
        <dbReference type="ChEBI" id="CHEBI:10329"/>
        <dbReference type="ChEBI" id="CHEBI:15378"/>
        <dbReference type="ChEBI" id="CHEBI:18408"/>
        <dbReference type="ChEBI" id="CHEBI:58115"/>
        <dbReference type="ChEBI" id="CHEBI:60487"/>
        <dbReference type="EC" id="2.7.8.26"/>
    </reaction>
</comment>
<comment type="catalytic activity">
    <reaction evidence="1">
        <text>alpha-ribazole 5'-phosphate + adenosylcob(III)inamide-GDP = adenosylcob(III)alamin 5'-phosphate + GMP + H(+)</text>
        <dbReference type="Rhea" id="RHEA:23560"/>
        <dbReference type="ChEBI" id="CHEBI:15378"/>
        <dbReference type="ChEBI" id="CHEBI:57918"/>
        <dbReference type="ChEBI" id="CHEBI:58115"/>
        <dbReference type="ChEBI" id="CHEBI:60487"/>
        <dbReference type="ChEBI" id="CHEBI:60493"/>
        <dbReference type="EC" id="2.7.8.26"/>
    </reaction>
</comment>
<comment type="cofactor">
    <cofactor evidence="1">
        <name>Mg(2+)</name>
        <dbReference type="ChEBI" id="CHEBI:18420"/>
    </cofactor>
</comment>
<comment type="pathway">
    <text evidence="1">Cofactor biosynthesis; adenosylcobalamin biosynthesis; adenosylcobalamin from cob(II)yrinate a,c-diamide: step 7/7.</text>
</comment>
<comment type="subcellular location">
    <subcellularLocation>
        <location evidence="1">Cell membrane</location>
        <topology evidence="1">Multi-pass membrane protein</topology>
    </subcellularLocation>
</comment>
<comment type="similarity">
    <text evidence="1">Belongs to the CobS family.</text>
</comment>
<evidence type="ECO:0000255" key="1">
    <source>
        <dbReference type="HAMAP-Rule" id="MF_00719"/>
    </source>
</evidence>
<dbReference type="EC" id="2.7.8.26" evidence="1"/>
<dbReference type="EMBL" id="CP000580">
    <property type="protein sequence ID" value="ABN99095.1"/>
    <property type="molecule type" value="Genomic_DNA"/>
</dbReference>
<dbReference type="KEGG" id="mjl:Mjls_3317"/>
<dbReference type="HOGENOM" id="CLU_057426_0_2_11"/>
<dbReference type="BioCyc" id="MSP164757:G1G8C-3343-MONOMER"/>
<dbReference type="UniPathway" id="UPA00148">
    <property type="reaction ID" value="UER00238"/>
</dbReference>
<dbReference type="GO" id="GO:0005886">
    <property type="term" value="C:plasma membrane"/>
    <property type="evidence" value="ECO:0007669"/>
    <property type="project" value="UniProtKB-SubCell"/>
</dbReference>
<dbReference type="GO" id="GO:0051073">
    <property type="term" value="F:adenosylcobinamide-GDP ribazoletransferase activity"/>
    <property type="evidence" value="ECO:0007669"/>
    <property type="project" value="UniProtKB-UniRule"/>
</dbReference>
<dbReference type="GO" id="GO:0008818">
    <property type="term" value="F:cobalamin 5'-phosphate synthase activity"/>
    <property type="evidence" value="ECO:0007669"/>
    <property type="project" value="UniProtKB-UniRule"/>
</dbReference>
<dbReference type="GO" id="GO:0009236">
    <property type="term" value="P:cobalamin biosynthetic process"/>
    <property type="evidence" value="ECO:0007669"/>
    <property type="project" value="UniProtKB-UniRule"/>
</dbReference>
<dbReference type="HAMAP" id="MF_00719">
    <property type="entry name" value="CobS"/>
    <property type="match status" value="1"/>
</dbReference>
<dbReference type="InterPro" id="IPR003805">
    <property type="entry name" value="CobS"/>
</dbReference>
<dbReference type="NCBIfam" id="NF001279">
    <property type="entry name" value="PRK00235.2-1"/>
    <property type="match status" value="1"/>
</dbReference>
<dbReference type="PANTHER" id="PTHR34148">
    <property type="entry name" value="ADENOSYLCOBINAMIDE-GDP RIBAZOLETRANSFERASE"/>
    <property type="match status" value="1"/>
</dbReference>
<dbReference type="PANTHER" id="PTHR34148:SF1">
    <property type="entry name" value="ADENOSYLCOBINAMIDE-GDP RIBAZOLETRANSFERASE"/>
    <property type="match status" value="1"/>
</dbReference>
<dbReference type="Pfam" id="PF02654">
    <property type="entry name" value="CobS"/>
    <property type="match status" value="1"/>
</dbReference>
<name>COBS_MYCSJ</name>
<sequence length="248" mass="24261">MIGSLAGAFAFGTVLPVPTGSTATLGRGVMTALPGVGIVLGAVAAAVLWAGSWAFGPHSALAGLLAVAVLLLATRGMHIDGLSDTVDGLGCYGAPERALRVMRDGSAGAFGAASIVVAVGAQTLAFSMLPGGWSGAVGVVVAVTAGRVAALVACRRGIPAAEGSALGGRVAGTQPAAVVLVWLAAVAALAIPATERIWQGPLTVVVAVGMTALLVRHCVRRFGGITGDVLGAAIEVTTTVVAVGLVIR</sequence>
<keyword id="KW-1003">Cell membrane</keyword>
<keyword id="KW-0169">Cobalamin biosynthesis</keyword>
<keyword id="KW-0460">Magnesium</keyword>
<keyword id="KW-0472">Membrane</keyword>
<keyword id="KW-0808">Transferase</keyword>
<keyword id="KW-0812">Transmembrane</keyword>
<keyword id="KW-1133">Transmembrane helix</keyword>
<proteinExistence type="inferred from homology"/>
<organism>
    <name type="scientific">Mycobacterium sp. (strain JLS)</name>
    <dbReference type="NCBI Taxonomy" id="164757"/>
    <lineage>
        <taxon>Bacteria</taxon>
        <taxon>Bacillati</taxon>
        <taxon>Actinomycetota</taxon>
        <taxon>Actinomycetes</taxon>
        <taxon>Mycobacteriales</taxon>
        <taxon>Mycobacteriaceae</taxon>
        <taxon>Mycobacterium</taxon>
    </lineage>
</organism>
<accession>A3Q1R8</accession>